<feature type="chain" id="PRO_1000011711" description="GTPase Der">
    <location>
        <begin position="1"/>
        <end position="447"/>
    </location>
</feature>
<feature type="domain" description="EngA-type G 1">
    <location>
        <begin position="3"/>
        <end position="167"/>
    </location>
</feature>
<feature type="domain" description="EngA-type G 2">
    <location>
        <begin position="181"/>
        <end position="354"/>
    </location>
</feature>
<feature type="domain" description="KH-like" evidence="1">
    <location>
        <begin position="355"/>
        <end position="439"/>
    </location>
</feature>
<feature type="binding site" evidence="1">
    <location>
        <begin position="9"/>
        <end position="16"/>
    </location>
    <ligand>
        <name>GTP</name>
        <dbReference type="ChEBI" id="CHEBI:37565"/>
        <label>1</label>
    </ligand>
</feature>
<feature type="binding site" evidence="1">
    <location>
        <begin position="56"/>
        <end position="60"/>
    </location>
    <ligand>
        <name>GTP</name>
        <dbReference type="ChEBI" id="CHEBI:37565"/>
        <label>1</label>
    </ligand>
</feature>
<feature type="binding site" evidence="1">
    <location>
        <begin position="119"/>
        <end position="122"/>
    </location>
    <ligand>
        <name>GTP</name>
        <dbReference type="ChEBI" id="CHEBI:37565"/>
        <label>1</label>
    </ligand>
</feature>
<feature type="binding site" evidence="1">
    <location>
        <begin position="187"/>
        <end position="194"/>
    </location>
    <ligand>
        <name>GTP</name>
        <dbReference type="ChEBI" id="CHEBI:37565"/>
        <label>2</label>
    </ligand>
</feature>
<feature type="binding site" evidence="1">
    <location>
        <begin position="234"/>
        <end position="238"/>
    </location>
    <ligand>
        <name>GTP</name>
        <dbReference type="ChEBI" id="CHEBI:37565"/>
        <label>2</label>
    </ligand>
</feature>
<feature type="binding site" evidence="1">
    <location>
        <begin position="299"/>
        <end position="302"/>
    </location>
    <ligand>
        <name>GTP</name>
        <dbReference type="ChEBI" id="CHEBI:37565"/>
        <label>2</label>
    </ligand>
</feature>
<name>DER_CUPPJ</name>
<proteinExistence type="inferred from homology"/>
<sequence>MKPVIALVGRPNVGKSTLFNRMTRSRDALVADLPGLTRDRHYGEGRIGDRPFIAIDTGGFEPVVKEGIVAEMAKQTRQAVVEADVVIFIVDGRLGLAPQDRAIADYLRKTGRRVMLAVNKAEGMKYTSVAADFYELGMGDPYAISAAHGDGVRELVDEALELAVQERPELAEEDADSGKGVKIAIVGRPNVGKSTLVNTLIGEERVIAFDMPGTTRDAIYVEFERGGKPYTLIDTAGLRRRGKVFEAIEKFSVVKTLQSIADANVVILLLDAQQDISDQDAHIAGFIVESGRALVVGVNKWDGLDGHTRDRIKHDLERKLQFLSFANFHFVSARERTGIGALMRSVDDAYAAAMVKLPTPQLTRVLQEAVEFQQPKRAGVSRPKLRYAHQGGSNPPIIVIHGNALSSVSETYRRYLENRYRAAFKLKGTPLRIEFRTNKNPYADSKD</sequence>
<protein>
    <recommendedName>
        <fullName evidence="1">GTPase Der</fullName>
    </recommendedName>
    <alternativeName>
        <fullName evidence="1">GTP-binding protein EngA</fullName>
    </alternativeName>
</protein>
<reference key="1">
    <citation type="journal article" date="2010" name="PLoS ONE">
        <title>The complete multipartite genome sequence of Cupriavidus necator JMP134, a versatile pollutant degrader.</title>
        <authorList>
            <person name="Lykidis A."/>
            <person name="Perez-Pantoja D."/>
            <person name="Ledger T."/>
            <person name="Mavromatis K."/>
            <person name="Anderson I.J."/>
            <person name="Ivanova N.N."/>
            <person name="Hooper S.D."/>
            <person name="Lapidus A."/>
            <person name="Lucas S."/>
            <person name="Gonzalez B."/>
            <person name="Kyrpides N.C."/>
        </authorList>
    </citation>
    <scope>NUCLEOTIDE SEQUENCE [LARGE SCALE GENOMIC DNA]</scope>
    <source>
        <strain>JMP134 / LMG 1197</strain>
    </source>
</reference>
<organism>
    <name type="scientific">Cupriavidus pinatubonensis (strain JMP 134 / LMG 1197)</name>
    <name type="common">Cupriavidus necator (strain JMP 134)</name>
    <dbReference type="NCBI Taxonomy" id="264198"/>
    <lineage>
        <taxon>Bacteria</taxon>
        <taxon>Pseudomonadati</taxon>
        <taxon>Pseudomonadota</taxon>
        <taxon>Betaproteobacteria</taxon>
        <taxon>Burkholderiales</taxon>
        <taxon>Burkholderiaceae</taxon>
        <taxon>Cupriavidus</taxon>
    </lineage>
</organism>
<dbReference type="EMBL" id="CP000090">
    <property type="protein sequence ID" value="AAZ61446.1"/>
    <property type="molecule type" value="Genomic_DNA"/>
</dbReference>
<dbReference type="SMR" id="Q46ZI7"/>
<dbReference type="STRING" id="264198.Reut_A2082"/>
<dbReference type="KEGG" id="reu:Reut_A2082"/>
<dbReference type="eggNOG" id="COG1160">
    <property type="taxonomic scope" value="Bacteria"/>
</dbReference>
<dbReference type="HOGENOM" id="CLU_016077_6_2_4"/>
<dbReference type="OrthoDB" id="9805918at2"/>
<dbReference type="GO" id="GO:0016887">
    <property type="term" value="F:ATP hydrolysis activity"/>
    <property type="evidence" value="ECO:0007669"/>
    <property type="project" value="InterPro"/>
</dbReference>
<dbReference type="GO" id="GO:0005525">
    <property type="term" value="F:GTP binding"/>
    <property type="evidence" value="ECO:0007669"/>
    <property type="project" value="UniProtKB-UniRule"/>
</dbReference>
<dbReference type="GO" id="GO:0043022">
    <property type="term" value="F:ribosome binding"/>
    <property type="evidence" value="ECO:0007669"/>
    <property type="project" value="TreeGrafter"/>
</dbReference>
<dbReference type="GO" id="GO:0042254">
    <property type="term" value="P:ribosome biogenesis"/>
    <property type="evidence" value="ECO:0007669"/>
    <property type="project" value="UniProtKB-KW"/>
</dbReference>
<dbReference type="CDD" id="cd01894">
    <property type="entry name" value="EngA1"/>
    <property type="match status" value="1"/>
</dbReference>
<dbReference type="CDD" id="cd01895">
    <property type="entry name" value="EngA2"/>
    <property type="match status" value="1"/>
</dbReference>
<dbReference type="FunFam" id="3.30.300.20:FF:000004">
    <property type="entry name" value="GTPase Der"/>
    <property type="match status" value="1"/>
</dbReference>
<dbReference type="FunFam" id="3.40.50.300:FF:000040">
    <property type="entry name" value="GTPase Der"/>
    <property type="match status" value="1"/>
</dbReference>
<dbReference type="FunFam" id="3.40.50.300:FF:000057">
    <property type="entry name" value="GTPase Der"/>
    <property type="match status" value="1"/>
</dbReference>
<dbReference type="Gene3D" id="3.30.300.20">
    <property type="match status" value="1"/>
</dbReference>
<dbReference type="Gene3D" id="3.40.50.300">
    <property type="entry name" value="P-loop containing nucleotide triphosphate hydrolases"/>
    <property type="match status" value="2"/>
</dbReference>
<dbReference type="HAMAP" id="MF_00195">
    <property type="entry name" value="GTPase_Der"/>
    <property type="match status" value="1"/>
</dbReference>
<dbReference type="InterPro" id="IPR003593">
    <property type="entry name" value="AAA+_ATPase"/>
</dbReference>
<dbReference type="InterPro" id="IPR031166">
    <property type="entry name" value="G_ENGA"/>
</dbReference>
<dbReference type="InterPro" id="IPR006073">
    <property type="entry name" value="GTP-bd"/>
</dbReference>
<dbReference type="InterPro" id="IPR016484">
    <property type="entry name" value="GTPase_Der"/>
</dbReference>
<dbReference type="InterPro" id="IPR032859">
    <property type="entry name" value="KH_dom-like"/>
</dbReference>
<dbReference type="InterPro" id="IPR015946">
    <property type="entry name" value="KH_dom-like_a/b"/>
</dbReference>
<dbReference type="InterPro" id="IPR027417">
    <property type="entry name" value="P-loop_NTPase"/>
</dbReference>
<dbReference type="InterPro" id="IPR005225">
    <property type="entry name" value="Small_GTP-bd"/>
</dbReference>
<dbReference type="NCBIfam" id="TIGR03594">
    <property type="entry name" value="GTPase_EngA"/>
    <property type="match status" value="1"/>
</dbReference>
<dbReference type="NCBIfam" id="TIGR00231">
    <property type="entry name" value="small_GTP"/>
    <property type="match status" value="2"/>
</dbReference>
<dbReference type="PANTHER" id="PTHR43834">
    <property type="entry name" value="GTPASE DER"/>
    <property type="match status" value="1"/>
</dbReference>
<dbReference type="PANTHER" id="PTHR43834:SF6">
    <property type="entry name" value="GTPASE DER"/>
    <property type="match status" value="1"/>
</dbReference>
<dbReference type="Pfam" id="PF14714">
    <property type="entry name" value="KH_dom-like"/>
    <property type="match status" value="1"/>
</dbReference>
<dbReference type="Pfam" id="PF01926">
    <property type="entry name" value="MMR_HSR1"/>
    <property type="match status" value="2"/>
</dbReference>
<dbReference type="PIRSF" id="PIRSF006485">
    <property type="entry name" value="GTP-binding_EngA"/>
    <property type="match status" value="1"/>
</dbReference>
<dbReference type="PRINTS" id="PR00326">
    <property type="entry name" value="GTP1OBG"/>
</dbReference>
<dbReference type="SMART" id="SM00382">
    <property type="entry name" value="AAA"/>
    <property type="match status" value="2"/>
</dbReference>
<dbReference type="SUPFAM" id="SSF52540">
    <property type="entry name" value="P-loop containing nucleoside triphosphate hydrolases"/>
    <property type="match status" value="2"/>
</dbReference>
<dbReference type="PROSITE" id="PS51712">
    <property type="entry name" value="G_ENGA"/>
    <property type="match status" value="2"/>
</dbReference>
<accession>Q46ZI7</accession>
<evidence type="ECO:0000255" key="1">
    <source>
        <dbReference type="HAMAP-Rule" id="MF_00195"/>
    </source>
</evidence>
<gene>
    <name evidence="1" type="primary">der</name>
    <name type="synonym">engA</name>
    <name type="ordered locus">Reut_A2082</name>
</gene>
<comment type="function">
    <text evidence="1">GTPase that plays an essential role in the late steps of ribosome biogenesis.</text>
</comment>
<comment type="subunit">
    <text evidence="1">Associates with the 50S ribosomal subunit.</text>
</comment>
<comment type="similarity">
    <text evidence="1">Belongs to the TRAFAC class TrmE-Era-EngA-EngB-Septin-like GTPase superfamily. EngA (Der) GTPase family.</text>
</comment>
<keyword id="KW-0342">GTP-binding</keyword>
<keyword id="KW-0547">Nucleotide-binding</keyword>
<keyword id="KW-0677">Repeat</keyword>
<keyword id="KW-0690">Ribosome biogenesis</keyword>